<reference key="1">
    <citation type="submission" date="2008-02" db="EMBL/GenBank/DDBJ databases">
        <title>Complete sequence of Shewanella woodyi ATCC 51908.</title>
        <authorList>
            <consortium name="US DOE Joint Genome Institute"/>
            <person name="Copeland A."/>
            <person name="Lucas S."/>
            <person name="Lapidus A."/>
            <person name="Glavina del Rio T."/>
            <person name="Dalin E."/>
            <person name="Tice H."/>
            <person name="Bruce D."/>
            <person name="Goodwin L."/>
            <person name="Pitluck S."/>
            <person name="Sims D."/>
            <person name="Brettin T."/>
            <person name="Detter J.C."/>
            <person name="Han C."/>
            <person name="Kuske C.R."/>
            <person name="Schmutz J."/>
            <person name="Larimer F."/>
            <person name="Land M."/>
            <person name="Hauser L."/>
            <person name="Kyrpides N."/>
            <person name="Lykidis A."/>
            <person name="Zhao J.-S."/>
            <person name="Richardson P."/>
        </authorList>
    </citation>
    <scope>NUCLEOTIDE SEQUENCE [LARGE SCALE GENOMIC DNA]</scope>
    <source>
        <strain>ATCC 51908 / MS32</strain>
    </source>
</reference>
<feature type="chain" id="PRO_1000131866" description="Probable Fe(2+)-trafficking protein">
    <location>
        <begin position="1"/>
        <end position="92"/>
    </location>
</feature>
<comment type="function">
    <text evidence="1">Could be a mediator in iron transactions between iron acquisition and iron-requiring processes, such as synthesis and/or repair of Fe-S clusters in biosynthetic enzymes.</text>
</comment>
<comment type="similarity">
    <text evidence="1">Belongs to the Fe(2+)-trafficking protein family.</text>
</comment>
<proteinExistence type="inferred from homology"/>
<name>FETP_SHEWM</name>
<gene>
    <name type="ordered locus">Swoo_1318</name>
</gene>
<sequence>MARTVNCVYLKKEAEGLGFQLYPGPLGKRIFDNVSKEAWGLWQAKQTMLINEKKLNMMNVEDRGFLETQMVNFLFEGKDVEIEGYVPQKDDD</sequence>
<protein>
    <recommendedName>
        <fullName evidence="1">Probable Fe(2+)-trafficking protein</fullName>
    </recommendedName>
</protein>
<organism>
    <name type="scientific">Shewanella woodyi (strain ATCC 51908 / MS32)</name>
    <dbReference type="NCBI Taxonomy" id="392500"/>
    <lineage>
        <taxon>Bacteria</taxon>
        <taxon>Pseudomonadati</taxon>
        <taxon>Pseudomonadota</taxon>
        <taxon>Gammaproteobacteria</taxon>
        <taxon>Alteromonadales</taxon>
        <taxon>Shewanellaceae</taxon>
        <taxon>Shewanella</taxon>
    </lineage>
</organism>
<accession>B1KIW2</accession>
<keyword id="KW-0408">Iron</keyword>
<keyword id="KW-1185">Reference proteome</keyword>
<evidence type="ECO:0000255" key="1">
    <source>
        <dbReference type="HAMAP-Rule" id="MF_00686"/>
    </source>
</evidence>
<dbReference type="EMBL" id="CP000961">
    <property type="protein sequence ID" value="ACA85610.1"/>
    <property type="molecule type" value="Genomic_DNA"/>
</dbReference>
<dbReference type="RefSeq" id="WP_012323956.1">
    <property type="nucleotide sequence ID" value="NC_010506.1"/>
</dbReference>
<dbReference type="SMR" id="B1KIW2"/>
<dbReference type="STRING" id="392500.Swoo_1318"/>
<dbReference type="KEGG" id="swd:Swoo_1318"/>
<dbReference type="eggNOG" id="COG2924">
    <property type="taxonomic scope" value="Bacteria"/>
</dbReference>
<dbReference type="HOGENOM" id="CLU_170994_0_0_6"/>
<dbReference type="Proteomes" id="UP000002168">
    <property type="component" value="Chromosome"/>
</dbReference>
<dbReference type="GO" id="GO:0005829">
    <property type="term" value="C:cytosol"/>
    <property type="evidence" value="ECO:0007669"/>
    <property type="project" value="TreeGrafter"/>
</dbReference>
<dbReference type="GO" id="GO:0005506">
    <property type="term" value="F:iron ion binding"/>
    <property type="evidence" value="ECO:0007669"/>
    <property type="project" value="UniProtKB-UniRule"/>
</dbReference>
<dbReference type="GO" id="GO:0034599">
    <property type="term" value="P:cellular response to oxidative stress"/>
    <property type="evidence" value="ECO:0007669"/>
    <property type="project" value="TreeGrafter"/>
</dbReference>
<dbReference type="FunFam" id="1.10.3880.10:FF:000001">
    <property type="entry name" value="Probable Fe(2+)-trafficking protein"/>
    <property type="match status" value="1"/>
</dbReference>
<dbReference type="Gene3D" id="1.10.3880.10">
    <property type="entry name" value="Fe(II) trafficking protein YggX"/>
    <property type="match status" value="1"/>
</dbReference>
<dbReference type="HAMAP" id="MF_00686">
    <property type="entry name" value="Fe_traffic_YggX"/>
    <property type="match status" value="1"/>
</dbReference>
<dbReference type="InterPro" id="IPR007457">
    <property type="entry name" value="Fe_traffick_prot_YggX"/>
</dbReference>
<dbReference type="InterPro" id="IPR036766">
    <property type="entry name" value="Fe_traffick_prot_YggX_sf"/>
</dbReference>
<dbReference type="NCBIfam" id="NF003817">
    <property type="entry name" value="PRK05408.1"/>
    <property type="match status" value="1"/>
</dbReference>
<dbReference type="PANTHER" id="PTHR36965">
    <property type="entry name" value="FE(2+)-TRAFFICKING PROTEIN-RELATED"/>
    <property type="match status" value="1"/>
</dbReference>
<dbReference type="PANTHER" id="PTHR36965:SF1">
    <property type="entry name" value="FE(2+)-TRAFFICKING PROTEIN-RELATED"/>
    <property type="match status" value="1"/>
</dbReference>
<dbReference type="Pfam" id="PF04362">
    <property type="entry name" value="Iron_traffic"/>
    <property type="match status" value="1"/>
</dbReference>
<dbReference type="PIRSF" id="PIRSF029827">
    <property type="entry name" value="Fe_traffic_YggX"/>
    <property type="match status" value="1"/>
</dbReference>
<dbReference type="SUPFAM" id="SSF111148">
    <property type="entry name" value="YggX-like"/>
    <property type="match status" value="1"/>
</dbReference>